<comment type="function">
    <text evidence="2">Prevents ENO1-mediated transcriptional repression and antagonizes ENO1-mediated cell death. May play a role in vesicular transport from endoplasmic reticulum to Golgi (By similarity).</text>
</comment>
<comment type="subunit">
    <text evidence="1 2">Part of the multisubunit TRAPP (transport protein particle) complex. Interacts with ENO1, PITX1, SF1, TRAPPC2L and TRAPPC3.</text>
</comment>
<comment type="subcellular location">
    <subcellularLocation>
        <location evidence="1">Cytoplasm</location>
        <location evidence="1">Perinuclear region</location>
    </subcellularLocation>
    <subcellularLocation>
        <location evidence="1">Nucleus</location>
    </subcellularLocation>
    <subcellularLocation>
        <location evidence="1">Endoplasmic reticulum-Golgi intermediate compartment</location>
    </subcellularLocation>
    <subcellularLocation>
        <location evidence="1">Cytoplasm</location>
    </subcellularLocation>
    <text evidence="1">Localized in perinuclear granular structures.</text>
</comment>
<comment type="similarity">
    <text evidence="3">Belongs to the TRAPP small subunits family. Sedlin subfamily.</text>
</comment>
<accession>D3ZVF4</accession>
<feature type="chain" id="PRO_0000412463" description="Trafficking protein particle complex subunit 2B">
    <location>
        <begin position="1"/>
        <end position="140"/>
    </location>
</feature>
<reference key="1">
    <citation type="journal article" date="2004" name="Nature">
        <title>Genome sequence of the Brown Norway rat yields insights into mammalian evolution.</title>
        <authorList>
            <person name="Gibbs R.A."/>
            <person name="Weinstock G.M."/>
            <person name="Metzker M.L."/>
            <person name="Muzny D.M."/>
            <person name="Sodergren E.J."/>
            <person name="Scherer S."/>
            <person name="Scott G."/>
            <person name="Steffen D."/>
            <person name="Worley K.C."/>
            <person name="Burch P.E."/>
            <person name="Okwuonu G."/>
            <person name="Hines S."/>
            <person name="Lewis L."/>
            <person name="Deramo C."/>
            <person name="Delgado O."/>
            <person name="Dugan-Rocha S."/>
            <person name="Miner G."/>
            <person name="Morgan M."/>
            <person name="Hawes A."/>
            <person name="Gill R."/>
            <person name="Holt R.A."/>
            <person name="Adams M.D."/>
            <person name="Amanatides P.G."/>
            <person name="Baden-Tillson H."/>
            <person name="Barnstead M."/>
            <person name="Chin S."/>
            <person name="Evans C.A."/>
            <person name="Ferriera S."/>
            <person name="Fosler C."/>
            <person name="Glodek A."/>
            <person name="Gu Z."/>
            <person name="Jennings D."/>
            <person name="Kraft C.L."/>
            <person name="Nguyen T."/>
            <person name="Pfannkoch C.M."/>
            <person name="Sitter C."/>
            <person name="Sutton G.G."/>
            <person name="Venter J.C."/>
            <person name="Woodage T."/>
            <person name="Smith D."/>
            <person name="Lee H.-M."/>
            <person name="Gustafson E."/>
            <person name="Cahill P."/>
            <person name="Kana A."/>
            <person name="Doucette-Stamm L."/>
            <person name="Weinstock K."/>
            <person name="Fechtel K."/>
            <person name="Weiss R.B."/>
            <person name="Dunn D.M."/>
            <person name="Green E.D."/>
            <person name="Blakesley R.W."/>
            <person name="Bouffard G.G."/>
            <person name="De Jong P.J."/>
            <person name="Osoegawa K."/>
            <person name="Zhu B."/>
            <person name="Marra M."/>
            <person name="Schein J."/>
            <person name="Bosdet I."/>
            <person name="Fjell C."/>
            <person name="Jones S."/>
            <person name="Krzywinski M."/>
            <person name="Mathewson C."/>
            <person name="Siddiqui A."/>
            <person name="Wye N."/>
            <person name="McPherson J."/>
            <person name="Zhao S."/>
            <person name="Fraser C.M."/>
            <person name="Shetty J."/>
            <person name="Shatsman S."/>
            <person name="Geer K."/>
            <person name="Chen Y."/>
            <person name="Abramzon S."/>
            <person name="Nierman W.C."/>
            <person name="Havlak P.H."/>
            <person name="Chen R."/>
            <person name="Durbin K.J."/>
            <person name="Egan A."/>
            <person name="Ren Y."/>
            <person name="Song X.-Z."/>
            <person name="Li B."/>
            <person name="Liu Y."/>
            <person name="Qin X."/>
            <person name="Cawley S."/>
            <person name="Cooney A.J."/>
            <person name="D'Souza L.M."/>
            <person name="Martin K."/>
            <person name="Wu J.Q."/>
            <person name="Gonzalez-Garay M.L."/>
            <person name="Jackson A.R."/>
            <person name="Kalafus K.J."/>
            <person name="McLeod M.P."/>
            <person name="Milosavljevic A."/>
            <person name="Virk D."/>
            <person name="Volkov A."/>
            <person name="Wheeler D.A."/>
            <person name="Zhang Z."/>
            <person name="Bailey J.A."/>
            <person name="Eichler E.E."/>
            <person name="Tuzun E."/>
            <person name="Birney E."/>
            <person name="Mongin E."/>
            <person name="Ureta-Vidal A."/>
            <person name="Woodwark C."/>
            <person name="Zdobnov E."/>
            <person name="Bork P."/>
            <person name="Suyama M."/>
            <person name="Torrents D."/>
            <person name="Alexandersson M."/>
            <person name="Trask B.J."/>
            <person name="Young J.M."/>
            <person name="Huang H."/>
            <person name="Wang H."/>
            <person name="Xing H."/>
            <person name="Daniels S."/>
            <person name="Gietzen D."/>
            <person name="Schmidt J."/>
            <person name="Stevens K."/>
            <person name="Vitt U."/>
            <person name="Wingrove J."/>
            <person name="Camara F."/>
            <person name="Mar Alba M."/>
            <person name="Abril J.F."/>
            <person name="Guigo R."/>
            <person name="Smit A."/>
            <person name="Dubchak I."/>
            <person name="Rubin E.M."/>
            <person name="Couronne O."/>
            <person name="Poliakov A."/>
            <person name="Huebner N."/>
            <person name="Ganten D."/>
            <person name="Goesele C."/>
            <person name="Hummel O."/>
            <person name="Kreitler T."/>
            <person name="Lee Y.-A."/>
            <person name="Monti J."/>
            <person name="Schulz H."/>
            <person name="Zimdahl H."/>
            <person name="Himmelbauer H."/>
            <person name="Lehrach H."/>
            <person name="Jacob H.J."/>
            <person name="Bromberg S."/>
            <person name="Gullings-Handley J."/>
            <person name="Jensen-Seaman M.I."/>
            <person name="Kwitek A.E."/>
            <person name="Lazar J."/>
            <person name="Pasko D."/>
            <person name="Tonellato P.J."/>
            <person name="Twigger S."/>
            <person name="Ponting C.P."/>
            <person name="Duarte J.M."/>
            <person name="Rice S."/>
            <person name="Goodstadt L."/>
            <person name="Beatson S.A."/>
            <person name="Emes R.D."/>
            <person name="Winter E.E."/>
            <person name="Webber C."/>
            <person name="Brandt P."/>
            <person name="Nyakatura G."/>
            <person name="Adetobi M."/>
            <person name="Chiaromonte F."/>
            <person name="Elnitski L."/>
            <person name="Eswara P."/>
            <person name="Hardison R.C."/>
            <person name="Hou M."/>
            <person name="Kolbe D."/>
            <person name="Makova K."/>
            <person name="Miller W."/>
            <person name="Nekrutenko A."/>
            <person name="Riemer C."/>
            <person name="Schwartz S."/>
            <person name="Taylor J."/>
            <person name="Yang S."/>
            <person name="Zhang Y."/>
            <person name="Lindpaintner K."/>
            <person name="Andrews T.D."/>
            <person name="Caccamo M."/>
            <person name="Clamp M."/>
            <person name="Clarke L."/>
            <person name="Curwen V."/>
            <person name="Durbin R.M."/>
            <person name="Eyras E."/>
            <person name="Searle S.M."/>
            <person name="Cooper G.M."/>
            <person name="Batzoglou S."/>
            <person name="Brudno M."/>
            <person name="Sidow A."/>
            <person name="Stone E.A."/>
            <person name="Payseur B.A."/>
            <person name="Bourque G."/>
            <person name="Lopez-Otin C."/>
            <person name="Puente X.S."/>
            <person name="Chakrabarti K."/>
            <person name="Chatterji S."/>
            <person name="Dewey C."/>
            <person name="Pachter L."/>
            <person name="Bray N."/>
            <person name="Yap V.B."/>
            <person name="Caspi A."/>
            <person name="Tesler G."/>
            <person name="Pevzner P.A."/>
            <person name="Haussler D."/>
            <person name="Roskin K.M."/>
            <person name="Baertsch R."/>
            <person name="Clawson H."/>
            <person name="Furey T.S."/>
            <person name="Hinrichs A.S."/>
            <person name="Karolchik D."/>
            <person name="Kent W.J."/>
            <person name="Rosenbloom K.R."/>
            <person name="Trumbower H."/>
            <person name="Weirauch M."/>
            <person name="Cooper D.N."/>
            <person name="Stenson P.D."/>
            <person name="Ma B."/>
            <person name="Brent M."/>
            <person name="Arumugam M."/>
            <person name="Shteynberg D."/>
            <person name="Copley R.R."/>
            <person name="Taylor M.S."/>
            <person name="Riethman H."/>
            <person name="Mudunuri U."/>
            <person name="Peterson J."/>
            <person name="Guyer M."/>
            <person name="Felsenfeld A."/>
            <person name="Old S."/>
            <person name="Mockrin S."/>
            <person name="Collins F.S."/>
        </authorList>
    </citation>
    <scope>NUCLEOTIDE SEQUENCE [LARGE SCALE GENOMIC DNA]</scope>
    <source>
        <strain>Brown Norway</strain>
    </source>
</reference>
<reference key="2">
    <citation type="submission" date="2005-07" db="EMBL/GenBank/DDBJ databases">
        <authorList>
            <person name="Mural R.J."/>
            <person name="Adams M.D."/>
            <person name="Myers E.W."/>
            <person name="Smith H.O."/>
            <person name="Venter J.C."/>
        </authorList>
    </citation>
    <scope>NUCLEOTIDE SEQUENCE [LARGE SCALE GENOMIC DNA]</scope>
    <source>
        <strain>Brown Norway</strain>
    </source>
</reference>
<organism>
    <name type="scientific">Rattus norvegicus</name>
    <name type="common">Rat</name>
    <dbReference type="NCBI Taxonomy" id="10116"/>
    <lineage>
        <taxon>Eukaryota</taxon>
        <taxon>Metazoa</taxon>
        <taxon>Chordata</taxon>
        <taxon>Craniata</taxon>
        <taxon>Vertebrata</taxon>
        <taxon>Euteleostomi</taxon>
        <taxon>Mammalia</taxon>
        <taxon>Eutheria</taxon>
        <taxon>Euarchontoglires</taxon>
        <taxon>Glires</taxon>
        <taxon>Rodentia</taxon>
        <taxon>Myomorpha</taxon>
        <taxon>Muroidea</taxon>
        <taxon>Muridae</taxon>
        <taxon>Murinae</taxon>
        <taxon>Rattus</taxon>
    </lineage>
</organism>
<dbReference type="EMBL" id="AC105470">
    <property type="status" value="NOT_ANNOTATED_CDS"/>
    <property type="molecule type" value="Genomic_DNA"/>
</dbReference>
<dbReference type="EMBL" id="CH473948">
    <property type="protein sequence ID" value="EDM04327.1"/>
    <property type="molecule type" value="Genomic_DNA"/>
</dbReference>
<dbReference type="EMBL" id="CH473948">
    <property type="protein sequence ID" value="EDM04328.1"/>
    <property type="molecule type" value="Genomic_DNA"/>
</dbReference>
<dbReference type="EMBL" id="CH473948">
    <property type="protein sequence ID" value="EDM04329.1"/>
    <property type="molecule type" value="Genomic_DNA"/>
</dbReference>
<dbReference type="RefSeq" id="NP_001258040.1">
    <property type="nucleotide sequence ID" value="NM_001271111.1"/>
</dbReference>
<dbReference type="RefSeq" id="NP_001258041.1">
    <property type="nucleotide sequence ID" value="NM_001271112.1"/>
</dbReference>
<dbReference type="RefSeq" id="XP_006246258.1">
    <property type="nucleotide sequence ID" value="XM_006246196.3"/>
</dbReference>
<dbReference type="RefSeq" id="XP_006246259.1">
    <property type="nucleotide sequence ID" value="XM_006246197.3"/>
</dbReference>
<dbReference type="SMR" id="D3ZVF4"/>
<dbReference type="FunCoup" id="D3ZVF4">
    <property type="interactions" value="167"/>
</dbReference>
<dbReference type="STRING" id="10116.ENSRNOP00000006006"/>
<dbReference type="iPTMnet" id="D3ZVF4"/>
<dbReference type="PhosphoSitePlus" id="D3ZVF4"/>
<dbReference type="jPOST" id="D3ZVF4"/>
<dbReference type="PaxDb" id="10116-ENSRNOP00000006006"/>
<dbReference type="PeptideAtlas" id="D3ZVF4"/>
<dbReference type="Ensembl" id="ENSRNOT00000073738.3">
    <property type="protein sequence ID" value="ENSRNOP00000066171.1"/>
    <property type="gene ID" value="ENSRNOG00000049062.3"/>
</dbReference>
<dbReference type="GeneID" id="100910318"/>
<dbReference type="KEGG" id="rno:100910318"/>
<dbReference type="AGR" id="RGD:6499350"/>
<dbReference type="CTD" id="10597"/>
<dbReference type="RGD" id="6499350">
    <property type="gene designation" value="Trappc2b"/>
</dbReference>
<dbReference type="eggNOG" id="KOG3487">
    <property type="taxonomic scope" value="Eukaryota"/>
</dbReference>
<dbReference type="GeneTree" id="ENSGT00940000164277"/>
<dbReference type="HOGENOM" id="CLU_085828_0_2_1"/>
<dbReference type="InParanoid" id="D3ZVF4"/>
<dbReference type="OMA" id="FFQELHE"/>
<dbReference type="OrthoDB" id="10252102at2759"/>
<dbReference type="PhylomeDB" id="D3ZVF4"/>
<dbReference type="TreeFam" id="TF314814"/>
<dbReference type="PRO" id="PR:D3ZVF4"/>
<dbReference type="Proteomes" id="UP000002494">
    <property type="component" value="Chromosome 10"/>
</dbReference>
<dbReference type="Proteomes" id="UP000234681">
    <property type="component" value="Chromosome 10"/>
</dbReference>
<dbReference type="Bgee" id="ENSRNOG00000004419">
    <property type="expression patterns" value="Expressed in ovary and 19 other cell types or tissues"/>
</dbReference>
<dbReference type="GO" id="GO:0005737">
    <property type="term" value="C:cytoplasm"/>
    <property type="evidence" value="ECO:0000318"/>
    <property type="project" value="GO_Central"/>
</dbReference>
<dbReference type="GO" id="GO:0005793">
    <property type="term" value="C:endoplasmic reticulum-Golgi intermediate compartment"/>
    <property type="evidence" value="ECO:0007669"/>
    <property type="project" value="UniProtKB-SubCell"/>
</dbReference>
<dbReference type="GO" id="GO:0005634">
    <property type="term" value="C:nucleus"/>
    <property type="evidence" value="ECO:0000250"/>
    <property type="project" value="UniProtKB"/>
</dbReference>
<dbReference type="GO" id="GO:0048471">
    <property type="term" value="C:perinuclear region of cytoplasm"/>
    <property type="evidence" value="ECO:0007669"/>
    <property type="project" value="UniProtKB-SubCell"/>
</dbReference>
<dbReference type="GO" id="GO:0030008">
    <property type="term" value="C:TRAPP complex"/>
    <property type="evidence" value="ECO:0000318"/>
    <property type="project" value="GO_Central"/>
</dbReference>
<dbReference type="GO" id="GO:0006888">
    <property type="term" value="P:endoplasmic reticulum to Golgi vesicle-mediated transport"/>
    <property type="evidence" value="ECO:0000318"/>
    <property type="project" value="GO_Central"/>
</dbReference>
<dbReference type="CDD" id="cd14825">
    <property type="entry name" value="TRAPPC2_sedlin"/>
    <property type="match status" value="1"/>
</dbReference>
<dbReference type="FunFam" id="3.30.450.70:FF:000001">
    <property type="entry name" value="Trafficking protein particle complex subunit 2"/>
    <property type="match status" value="1"/>
</dbReference>
<dbReference type="Gene3D" id="3.30.450.70">
    <property type="match status" value="1"/>
</dbReference>
<dbReference type="InterPro" id="IPR011012">
    <property type="entry name" value="Longin-like_dom_sf"/>
</dbReference>
<dbReference type="InterPro" id="IPR006722">
    <property type="entry name" value="Sedlin"/>
</dbReference>
<dbReference type="PANTHER" id="PTHR12403">
    <property type="entry name" value="TRAFFICKING PROTEIN PARTICLE COMPLEX SUBUNIT 2"/>
    <property type="match status" value="1"/>
</dbReference>
<dbReference type="Pfam" id="PF04628">
    <property type="entry name" value="Sedlin_N"/>
    <property type="match status" value="1"/>
</dbReference>
<dbReference type="SUPFAM" id="SSF64356">
    <property type="entry name" value="SNARE-like"/>
    <property type="match status" value="1"/>
</dbReference>
<evidence type="ECO:0000250" key="1">
    <source>
        <dbReference type="UniProtKB" id="P0DI81"/>
    </source>
</evidence>
<evidence type="ECO:0000250" key="2">
    <source>
        <dbReference type="UniProtKB" id="P0DI82"/>
    </source>
</evidence>
<evidence type="ECO:0000305" key="3"/>
<evidence type="ECO:0000312" key="4">
    <source>
        <dbReference type="RGD" id="6499350"/>
    </source>
</evidence>
<sequence>MSGSFYFVIVGHHDNPVFEMEFLPAGKTESKDEHRHLNQFIAHAALDLVDENMWLSNNMYLKTVDKFNEWFVSAFVTAGHMRLIMLHDVRQEDGIKNFFTDVYDLYIKFAMNPFYEPNSPIRSTAFERKVQFLGKKHLLS</sequence>
<protein>
    <recommendedName>
        <fullName evidence="4">Trafficking protein particle complex subunit 2B</fullName>
    </recommendedName>
</protein>
<proteinExistence type="inferred from homology"/>
<keyword id="KW-0963">Cytoplasm</keyword>
<keyword id="KW-0931">ER-Golgi transport</keyword>
<keyword id="KW-0539">Nucleus</keyword>
<keyword id="KW-1185">Reference proteome</keyword>
<keyword id="KW-0804">Transcription</keyword>
<keyword id="KW-0813">Transport</keyword>
<name>TPC2B_RAT</name>
<gene>
    <name evidence="4" type="primary">Trappc2b</name>
</gene>